<organism>
    <name type="scientific">Bos taurus</name>
    <name type="common">Bovine</name>
    <dbReference type="NCBI Taxonomy" id="9913"/>
    <lineage>
        <taxon>Eukaryota</taxon>
        <taxon>Metazoa</taxon>
        <taxon>Chordata</taxon>
        <taxon>Craniata</taxon>
        <taxon>Vertebrata</taxon>
        <taxon>Euteleostomi</taxon>
        <taxon>Mammalia</taxon>
        <taxon>Eutheria</taxon>
        <taxon>Laurasiatheria</taxon>
        <taxon>Artiodactyla</taxon>
        <taxon>Ruminantia</taxon>
        <taxon>Pecora</taxon>
        <taxon>Bovidae</taxon>
        <taxon>Bovinae</taxon>
        <taxon>Bos</taxon>
    </lineage>
</organism>
<name>CXCR3_BOVIN</name>
<evidence type="ECO:0000250" key="1"/>
<evidence type="ECO:0000250" key="2">
    <source>
        <dbReference type="UniProtKB" id="O88410"/>
    </source>
</evidence>
<evidence type="ECO:0000250" key="3">
    <source>
        <dbReference type="UniProtKB" id="P49682"/>
    </source>
</evidence>
<evidence type="ECO:0000255" key="4"/>
<evidence type="ECO:0000255" key="5">
    <source>
        <dbReference type="PROSITE-ProRule" id="PRU00521"/>
    </source>
</evidence>
<evidence type="ECO:0000256" key="6">
    <source>
        <dbReference type="SAM" id="MobiDB-lite"/>
    </source>
</evidence>
<dbReference type="EMBL" id="AY834254">
    <property type="protein sequence ID" value="AAV97931.1"/>
    <property type="molecule type" value="mRNA"/>
</dbReference>
<dbReference type="EMBL" id="BT030690">
    <property type="protein sequence ID" value="ABS45006.1"/>
    <property type="molecule type" value="mRNA"/>
</dbReference>
<dbReference type="RefSeq" id="NP_001011673.1">
    <property type="nucleotide sequence ID" value="NM_001011673.1"/>
</dbReference>
<dbReference type="SMR" id="Q5MD61"/>
<dbReference type="FunCoup" id="Q5MD61">
    <property type="interactions" value="483"/>
</dbReference>
<dbReference type="STRING" id="9913.ENSBTAP00000019690"/>
<dbReference type="GlyCosmos" id="Q5MD61">
    <property type="glycosylation" value="3 sites, No reported glycans"/>
</dbReference>
<dbReference type="GlyGen" id="Q5MD61">
    <property type="glycosylation" value="3 sites"/>
</dbReference>
<dbReference type="PaxDb" id="9913-ENSBTAP00000019690"/>
<dbReference type="GeneID" id="497018"/>
<dbReference type="KEGG" id="bta:497018"/>
<dbReference type="CTD" id="2833"/>
<dbReference type="VEuPathDB" id="HostDB:ENSBTAG00000014798"/>
<dbReference type="eggNOG" id="KOG3656">
    <property type="taxonomic scope" value="Eukaryota"/>
</dbReference>
<dbReference type="HOGENOM" id="CLU_009579_8_3_1"/>
<dbReference type="InParanoid" id="Q5MD61"/>
<dbReference type="OMA" id="HAVHMYK"/>
<dbReference type="OrthoDB" id="9818824at2759"/>
<dbReference type="TreeFam" id="TF330966"/>
<dbReference type="Reactome" id="R-BTA-380108">
    <property type="pathway name" value="Chemokine receptors bind chemokines"/>
</dbReference>
<dbReference type="Reactome" id="R-BTA-418594">
    <property type="pathway name" value="G alpha (i) signalling events"/>
</dbReference>
<dbReference type="Proteomes" id="UP000009136">
    <property type="component" value="Chromosome X"/>
</dbReference>
<dbReference type="Bgee" id="ENSBTAG00000014798">
    <property type="expression patterns" value="Expressed in mesenteric lymph node and 59 other cell types or tissues"/>
</dbReference>
<dbReference type="GO" id="GO:0009897">
    <property type="term" value="C:external side of plasma membrane"/>
    <property type="evidence" value="ECO:0000318"/>
    <property type="project" value="GO_Central"/>
</dbReference>
<dbReference type="GO" id="GO:0005886">
    <property type="term" value="C:plasma membrane"/>
    <property type="evidence" value="ECO:0000250"/>
    <property type="project" value="UniProtKB"/>
</dbReference>
<dbReference type="GO" id="GO:0019957">
    <property type="term" value="F:C-C chemokine binding"/>
    <property type="evidence" value="ECO:0000318"/>
    <property type="project" value="GO_Central"/>
</dbReference>
<dbReference type="GO" id="GO:0016493">
    <property type="term" value="F:C-C chemokine receptor activity"/>
    <property type="evidence" value="ECO:0000318"/>
    <property type="project" value="GO_Central"/>
</dbReference>
<dbReference type="GO" id="GO:0019958">
    <property type="term" value="F:C-X-C chemokine binding"/>
    <property type="evidence" value="ECO:0000250"/>
    <property type="project" value="UniProtKB"/>
</dbReference>
<dbReference type="GO" id="GO:0016494">
    <property type="term" value="F:C-X-C chemokine receptor activity"/>
    <property type="evidence" value="ECO:0007669"/>
    <property type="project" value="InterPro"/>
</dbReference>
<dbReference type="GO" id="GO:0038023">
    <property type="term" value="F:signaling receptor activity"/>
    <property type="evidence" value="ECO:0000250"/>
    <property type="project" value="UniProtKB"/>
</dbReference>
<dbReference type="GO" id="GO:0001525">
    <property type="term" value="P:angiogenesis"/>
    <property type="evidence" value="ECO:0007669"/>
    <property type="project" value="UniProtKB-KW"/>
</dbReference>
<dbReference type="GO" id="GO:0019722">
    <property type="term" value="P:calcium-mediated signaling"/>
    <property type="evidence" value="ECO:0000318"/>
    <property type="project" value="GO_Central"/>
</dbReference>
<dbReference type="GO" id="GO:0060326">
    <property type="term" value="P:cell chemotaxis"/>
    <property type="evidence" value="ECO:0000318"/>
    <property type="project" value="GO_Central"/>
</dbReference>
<dbReference type="GO" id="GO:0007186">
    <property type="term" value="P:G protein-coupled receptor signaling pathway"/>
    <property type="evidence" value="ECO:0000250"/>
    <property type="project" value="UniProtKB"/>
</dbReference>
<dbReference type="GO" id="GO:0006955">
    <property type="term" value="P:immune response"/>
    <property type="evidence" value="ECO:0000318"/>
    <property type="project" value="GO_Central"/>
</dbReference>
<dbReference type="GO" id="GO:0006954">
    <property type="term" value="P:inflammatory response"/>
    <property type="evidence" value="ECO:0007669"/>
    <property type="project" value="InterPro"/>
</dbReference>
<dbReference type="GO" id="GO:1900118">
    <property type="term" value="P:negative regulation of execution phase of apoptosis"/>
    <property type="evidence" value="ECO:0000250"/>
    <property type="project" value="UniProtKB"/>
</dbReference>
<dbReference type="GO" id="GO:0045766">
    <property type="term" value="P:positive regulation of angiogenesis"/>
    <property type="evidence" value="ECO:0000250"/>
    <property type="project" value="UniProtKB"/>
</dbReference>
<dbReference type="GO" id="GO:0008284">
    <property type="term" value="P:positive regulation of cell population proliferation"/>
    <property type="evidence" value="ECO:0000250"/>
    <property type="project" value="UniProtKB"/>
</dbReference>
<dbReference type="GO" id="GO:0050921">
    <property type="term" value="P:positive regulation of chemotaxis"/>
    <property type="evidence" value="ECO:0000250"/>
    <property type="project" value="UniProtKB"/>
</dbReference>
<dbReference type="GO" id="GO:0007204">
    <property type="term" value="P:positive regulation of cytosolic calcium ion concentration"/>
    <property type="evidence" value="ECO:0000318"/>
    <property type="project" value="GO_Central"/>
</dbReference>
<dbReference type="GO" id="GO:0051281">
    <property type="term" value="P:positive regulation of release of sequestered calcium ion into cytosol"/>
    <property type="evidence" value="ECO:0000250"/>
    <property type="project" value="UniProtKB"/>
</dbReference>
<dbReference type="GO" id="GO:0002685">
    <property type="term" value="P:regulation of leukocyte migration"/>
    <property type="evidence" value="ECO:0007669"/>
    <property type="project" value="InterPro"/>
</dbReference>
<dbReference type="CDD" id="cd15180">
    <property type="entry name" value="7tmA_CXCR3"/>
    <property type="match status" value="1"/>
</dbReference>
<dbReference type="FunFam" id="1.20.1070.10:FF:000159">
    <property type="entry name" value="C-X-C chemokine receptor type 3"/>
    <property type="match status" value="1"/>
</dbReference>
<dbReference type="Gene3D" id="1.20.1070.10">
    <property type="entry name" value="Rhodopsin 7-helix transmembrane proteins"/>
    <property type="match status" value="1"/>
</dbReference>
<dbReference type="InterPro" id="IPR050119">
    <property type="entry name" value="CCR1-9-like"/>
</dbReference>
<dbReference type="InterPro" id="IPR004070">
    <property type="entry name" value="Chemokine_CXCR3"/>
</dbReference>
<dbReference type="InterPro" id="IPR000355">
    <property type="entry name" value="Chemokine_rcpt"/>
</dbReference>
<dbReference type="InterPro" id="IPR000276">
    <property type="entry name" value="GPCR_Rhodpsn"/>
</dbReference>
<dbReference type="InterPro" id="IPR017452">
    <property type="entry name" value="GPCR_Rhodpsn_7TM"/>
</dbReference>
<dbReference type="PANTHER" id="PTHR10489:SF671">
    <property type="entry name" value="C-X-C CHEMOKINE RECEPTOR TYPE 3"/>
    <property type="match status" value="1"/>
</dbReference>
<dbReference type="PANTHER" id="PTHR10489">
    <property type="entry name" value="CELL ADHESION MOLECULE"/>
    <property type="match status" value="1"/>
</dbReference>
<dbReference type="Pfam" id="PF00001">
    <property type="entry name" value="7tm_1"/>
    <property type="match status" value="1"/>
</dbReference>
<dbReference type="PRINTS" id="PR00657">
    <property type="entry name" value="CCCHEMOKINER"/>
</dbReference>
<dbReference type="PRINTS" id="PR01532">
    <property type="entry name" value="CXCCHMKINER3"/>
</dbReference>
<dbReference type="PRINTS" id="PR00237">
    <property type="entry name" value="GPCRRHODOPSN"/>
</dbReference>
<dbReference type="SUPFAM" id="SSF81321">
    <property type="entry name" value="Family A G protein-coupled receptor-like"/>
    <property type="match status" value="1"/>
</dbReference>
<dbReference type="PROSITE" id="PS00237">
    <property type="entry name" value="G_PROTEIN_RECEP_F1_1"/>
    <property type="match status" value="1"/>
</dbReference>
<dbReference type="PROSITE" id="PS50262">
    <property type="entry name" value="G_PROTEIN_RECEP_F1_2"/>
    <property type="match status" value="1"/>
</dbReference>
<sequence>MVPEMSERQEFQASDFAYLLENSSYDYGENETYFCCTSPPCPQDFSLNFDRTFLPVLYSLLFVLGLLGNGIVAVVLLSQRAALSSTDTFLLHLAVADALLVLTLPLWAVDAAIQWVFGSGLCKVAGALFNINFYAGALLLACISFDRYLSIVHATQLYRRGPPTRVALTCVAVWGLCLLFALPDFIFLSSHHDNRLNATHCQYNFPQEGHTALRILQLVAGFLLPLLVMAYCYARILAVLLVSRGQRRLRAMRLVVVVVVAFALCWTPYHLVVLVDTLMDLGALARNCGRESSVDIAKSVTSGMGYMHCCLNPLLYAFVGVKFRERMWVLLVRLGCPDQRCHQRQPSASRRESSWSETTEASYSGL</sequence>
<comment type="function">
    <text evidence="2 3">Receptor for the C-X-C chemokine CXCL9, CXCL10 and CXCL11 and mediates the proliferation, survival and angiogenic activity of mesangial cells through a heterotrimeric G-protein signaling pathway. Probably promotes cell chemotaxis response (By similarity). Binds to CCL21. Upon activation by PF4, induces activated T-lymphocytes migration mediated via downstream Ras/extracellular signal-regulated kinase (ERK) signaling (By similarity).</text>
</comment>
<comment type="subunit">
    <text evidence="3">Homomer. Forms heteromers with ACKR4 (By similarity). Interacts with PF4/CXCL4 (By similarity).</text>
</comment>
<comment type="subcellular location">
    <subcellularLocation>
        <location evidence="1">Cell membrane</location>
        <topology evidence="1">Multi-pass membrane protein</topology>
    </subcellularLocation>
</comment>
<comment type="PTM">
    <text evidence="1">Sulfation on Tyr-25 and Tyr-27 is essential for CXCL10 binding.</text>
</comment>
<comment type="PTM">
    <text evidence="1">N-glycosylated.</text>
</comment>
<comment type="similarity">
    <text evidence="5">Belongs to the G-protein coupled receptor 1 family.</text>
</comment>
<reference key="1">
    <citation type="submission" date="2004-11" db="EMBL/GenBank/DDBJ databases">
        <title>Molecular cloning and characterization of bovine chemokine receptors.</title>
        <authorList>
            <person name="Blumerman S.L."/>
            <person name="Baldwin C.L."/>
        </authorList>
    </citation>
    <scope>NUCLEOTIDE SEQUENCE [MRNA]</scope>
</reference>
<reference key="2">
    <citation type="journal article" date="2005" name="BMC Genomics">
        <title>Characterization of 954 bovine full-CDS cDNA sequences.</title>
        <authorList>
            <person name="Harhay G.P."/>
            <person name="Sonstegard T.S."/>
            <person name="Keele J.W."/>
            <person name="Heaton M.P."/>
            <person name="Clawson M.L."/>
            <person name="Snelling W.M."/>
            <person name="Wiedmann R.T."/>
            <person name="Van Tassell C.P."/>
            <person name="Smith T.P.L."/>
        </authorList>
    </citation>
    <scope>NUCLEOTIDE SEQUENCE [LARGE SCALE MRNA]</scope>
</reference>
<keyword id="KW-0037">Angiogenesis</keyword>
<keyword id="KW-1003">Cell membrane</keyword>
<keyword id="KW-0145">Chemotaxis</keyword>
<keyword id="KW-1015">Disulfide bond</keyword>
<keyword id="KW-0297">G-protein coupled receptor</keyword>
<keyword id="KW-0325">Glycoprotein</keyword>
<keyword id="KW-0472">Membrane</keyword>
<keyword id="KW-0675">Receptor</keyword>
<keyword id="KW-1185">Reference proteome</keyword>
<keyword id="KW-0765">Sulfation</keyword>
<keyword id="KW-0807">Transducer</keyword>
<keyword id="KW-0812">Transmembrane</keyword>
<keyword id="KW-1133">Transmembrane helix</keyword>
<proteinExistence type="evidence at transcript level"/>
<protein>
    <recommendedName>
        <fullName>C-X-C chemokine receptor type 3</fullName>
        <shortName>CXC-R3</shortName>
        <shortName>CXCR-3</shortName>
    </recommendedName>
    <alternativeName>
        <fullName>Interferon-inducible protein 10 receptor</fullName>
        <shortName>IP-10 receptor</shortName>
    </alternativeName>
    <cdAntigenName>CD183</cdAntigenName>
</protein>
<feature type="chain" id="PRO_0000069343" description="C-X-C chemokine receptor type 3">
    <location>
        <begin position="1"/>
        <end position="366"/>
    </location>
</feature>
<feature type="topological domain" description="Extracellular" evidence="4">
    <location>
        <begin position="1"/>
        <end position="55"/>
    </location>
</feature>
<feature type="transmembrane region" description="Helical; Name=1" evidence="4">
    <location>
        <begin position="56"/>
        <end position="76"/>
    </location>
</feature>
<feature type="topological domain" description="Cytoplasmic" evidence="4">
    <location>
        <begin position="77"/>
        <end position="88"/>
    </location>
</feature>
<feature type="transmembrane region" description="Helical; Name=2" evidence="4">
    <location>
        <begin position="89"/>
        <end position="109"/>
    </location>
</feature>
<feature type="topological domain" description="Extracellular" evidence="4">
    <location>
        <begin position="110"/>
        <end position="124"/>
    </location>
</feature>
<feature type="transmembrane region" description="Helical; Name=3" evidence="4">
    <location>
        <begin position="125"/>
        <end position="145"/>
    </location>
</feature>
<feature type="topological domain" description="Cytoplasmic" evidence="4">
    <location>
        <begin position="146"/>
        <end position="167"/>
    </location>
</feature>
<feature type="transmembrane region" description="Helical; Name=4" evidence="4">
    <location>
        <begin position="168"/>
        <end position="188"/>
    </location>
</feature>
<feature type="topological domain" description="Extracellular" evidence="4">
    <location>
        <begin position="189"/>
        <end position="221"/>
    </location>
</feature>
<feature type="transmembrane region" description="Helical; Name=5" evidence="4">
    <location>
        <begin position="222"/>
        <end position="242"/>
    </location>
</feature>
<feature type="topological domain" description="Cytoplasmic" evidence="4">
    <location>
        <begin position="243"/>
        <end position="254"/>
    </location>
</feature>
<feature type="transmembrane region" description="Helical; Name=6" evidence="4">
    <location>
        <begin position="255"/>
        <end position="275"/>
    </location>
</feature>
<feature type="topological domain" description="Extracellular" evidence="4">
    <location>
        <begin position="276"/>
        <end position="299"/>
    </location>
</feature>
<feature type="transmembrane region" description="Helical; Name=7" evidence="4">
    <location>
        <begin position="300"/>
        <end position="320"/>
    </location>
</feature>
<feature type="topological domain" description="Cytoplasmic" evidence="4">
    <location>
        <begin position="321"/>
        <end position="366"/>
    </location>
</feature>
<feature type="region of interest" description="Disordered" evidence="6">
    <location>
        <begin position="341"/>
        <end position="366"/>
    </location>
</feature>
<feature type="compositionally biased region" description="Low complexity" evidence="6">
    <location>
        <begin position="355"/>
        <end position="366"/>
    </location>
</feature>
<feature type="modified residue" description="Sulfotyrosine" evidence="1">
    <location>
        <position position="25"/>
    </location>
</feature>
<feature type="modified residue" description="Sulfotyrosine" evidence="1">
    <location>
        <position position="27"/>
    </location>
</feature>
<feature type="glycosylation site" description="N-linked (GlcNAc...) asparagine" evidence="4">
    <location>
        <position position="22"/>
    </location>
</feature>
<feature type="glycosylation site" description="N-linked (GlcNAc...) asparagine" evidence="4">
    <location>
        <position position="30"/>
    </location>
</feature>
<feature type="glycosylation site" description="N-linked (GlcNAc...) asparagine" evidence="4">
    <location>
        <position position="197"/>
    </location>
</feature>
<feature type="disulfide bond" evidence="5">
    <location>
        <begin position="122"/>
        <end position="201"/>
    </location>
</feature>
<gene>
    <name type="primary">CXCR3</name>
</gene>
<accession>Q5MD61</accession>
<accession>A7E3R9</accession>